<dbReference type="EC" id="2.3.1.129" evidence="1"/>
<dbReference type="EMBL" id="CU633749">
    <property type="protein sequence ID" value="CAQ69622.1"/>
    <property type="molecule type" value="Genomic_DNA"/>
</dbReference>
<dbReference type="RefSeq" id="WP_012352943.1">
    <property type="nucleotide sequence ID" value="NC_010528.1"/>
</dbReference>
<dbReference type="SMR" id="B3R2A5"/>
<dbReference type="GeneID" id="29762267"/>
<dbReference type="KEGG" id="cti:RALTA_A1679"/>
<dbReference type="eggNOG" id="COG1043">
    <property type="taxonomic scope" value="Bacteria"/>
</dbReference>
<dbReference type="HOGENOM" id="CLU_061249_0_0_4"/>
<dbReference type="BioCyc" id="CTAI977880:RALTA_RS08070-MONOMER"/>
<dbReference type="UniPathway" id="UPA00359">
    <property type="reaction ID" value="UER00477"/>
</dbReference>
<dbReference type="Proteomes" id="UP000001692">
    <property type="component" value="Chromosome 1"/>
</dbReference>
<dbReference type="GO" id="GO:0005737">
    <property type="term" value="C:cytoplasm"/>
    <property type="evidence" value="ECO:0007669"/>
    <property type="project" value="UniProtKB-SubCell"/>
</dbReference>
<dbReference type="GO" id="GO:0016020">
    <property type="term" value="C:membrane"/>
    <property type="evidence" value="ECO:0007669"/>
    <property type="project" value="GOC"/>
</dbReference>
<dbReference type="GO" id="GO:0008780">
    <property type="term" value="F:acyl-[acyl-carrier-protein]-UDP-N-acetylglucosamine O-acyltransferase activity"/>
    <property type="evidence" value="ECO:0007669"/>
    <property type="project" value="UniProtKB-UniRule"/>
</dbReference>
<dbReference type="GO" id="GO:0009245">
    <property type="term" value="P:lipid A biosynthetic process"/>
    <property type="evidence" value="ECO:0007669"/>
    <property type="project" value="UniProtKB-UniRule"/>
</dbReference>
<dbReference type="CDD" id="cd03351">
    <property type="entry name" value="LbH_UDP-GlcNAc_AT"/>
    <property type="match status" value="1"/>
</dbReference>
<dbReference type="Gene3D" id="2.160.10.10">
    <property type="entry name" value="Hexapeptide repeat proteins"/>
    <property type="match status" value="1"/>
</dbReference>
<dbReference type="Gene3D" id="1.20.1180.10">
    <property type="entry name" value="Udp N-acetylglucosamine O-acyltransferase, C-terminal domain"/>
    <property type="match status" value="1"/>
</dbReference>
<dbReference type="HAMAP" id="MF_00387">
    <property type="entry name" value="LpxA"/>
    <property type="match status" value="1"/>
</dbReference>
<dbReference type="InterPro" id="IPR029098">
    <property type="entry name" value="Acetyltransf_C"/>
</dbReference>
<dbReference type="InterPro" id="IPR037157">
    <property type="entry name" value="Acetyltransf_C_sf"/>
</dbReference>
<dbReference type="InterPro" id="IPR001451">
    <property type="entry name" value="Hexapep"/>
</dbReference>
<dbReference type="InterPro" id="IPR018357">
    <property type="entry name" value="Hexapep_transf_CS"/>
</dbReference>
<dbReference type="InterPro" id="IPR010137">
    <property type="entry name" value="Lipid_A_LpxA"/>
</dbReference>
<dbReference type="InterPro" id="IPR011004">
    <property type="entry name" value="Trimer_LpxA-like_sf"/>
</dbReference>
<dbReference type="NCBIfam" id="TIGR01852">
    <property type="entry name" value="lipid_A_lpxA"/>
    <property type="match status" value="1"/>
</dbReference>
<dbReference type="NCBIfam" id="NF003657">
    <property type="entry name" value="PRK05289.1"/>
    <property type="match status" value="1"/>
</dbReference>
<dbReference type="PANTHER" id="PTHR43480">
    <property type="entry name" value="ACYL-[ACYL-CARRIER-PROTEIN]--UDP-N-ACETYLGLUCOSAMINE O-ACYLTRANSFERASE"/>
    <property type="match status" value="1"/>
</dbReference>
<dbReference type="PANTHER" id="PTHR43480:SF1">
    <property type="entry name" value="ACYL-[ACYL-CARRIER-PROTEIN]--UDP-N-ACETYLGLUCOSAMINE O-ACYLTRANSFERASE, MITOCHONDRIAL-RELATED"/>
    <property type="match status" value="1"/>
</dbReference>
<dbReference type="Pfam" id="PF13720">
    <property type="entry name" value="Acetyltransf_11"/>
    <property type="match status" value="1"/>
</dbReference>
<dbReference type="Pfam" id="PF00132">
    <property type="entry name" value="Hexapep"/>
    <property type="match status" value="2"/>
</dbReference>
<dbReference type="PIRSF" id="PIRSF000456">
    <property type="entry name" value="UDP-GlcNAc_acltr"/>
    <property type="match status" value="1"/>
</dbReference>
<dbReference type="SUPFAM" id="SSF51161">
    <property type="entry name" value="Trimeric LpxA-like enzymes"/>
    <property type="match status" value="1"/>
</dbReference>
<dbReference type="PROSITE" id="PS00101">
    <property type="entry name" value="HEXAPEP_TRANSFERASES"/>
    <property type="match status" value="1"/>
</dbReference>
<comment type="function">
    <text evidence="1">Involved in the biosynthesis of lipid A, a phosphorylated glycolipid that anchors the lipopolysaccharide to the outer membrane of the cell.</text>
</comment>
<comment type="catalytic activity">
    <reaction evidence="1">
        <text>a (3R)-hydroxyacyl-[ACP] + UDP-N-acetyl-alpha-D-glucosamine = a UDP-3-O-[(3R)-3-hydroxyacyl]-N-acetyl-alpha-D-glucosamine + holo-[ACP]</text>
        <dbReference type="Rhea" id="RHEA:67812"/>
        <dbReference type="Rhea" id="RHEA-COMP:9685"/>
        <dbReference type="Rhea" id="RHEA-COMP:9945"/>
        <dbReference type="ChEBI" id="CHEBI:57705"/>
        <dbReference type="ChEBI" id="CHEBI:64479"/>
        <dbReference type="ChEBI" id="CHEBI:78827"/>
        <dbReference type="ChEBI" id="CHEBI:173225"/>
        <dbReference type="EC" id="2.3.1.129"/>
    </reaction>
</comment>
<comment type="pathway">
    <text evidence="1">Glycolipid biosynthesis; lipid IV(A) biosynthesis; lipid IV(A) from (3R)-3-hydroxytetradecanoyl-[acyl-carrier-protein] and UDP-N-acetyl-alpha-D-glucosamine: step 1/6.</text>
</comment>
<comment type="subunit">
    <text evidence="1">Homotrimer.</text>
</comment>
<comment type="subcellular location">
    <subcellularLocation>
        <location evidence="1">Cytoplasm</location>
    </subcellularLocation>
</comment>
<comment type="similarity">
    <text evidence="1">Belongs to the transferase hexapeptide repeat family. LpxA subfamily.</text>
</comment>
<evidence type="ECO:0000255" key="1">
    <source>
        <dbReference type="HAMAP-Rule" id="MF_00387"/>
    </source>
</evidence>
<gene>
    <name evidence="1" type="primary">lpxA</name>
    <name type="ordered locus">RALTA_A1679</name>
</gene>
<organism>
    <name type="scientific">Cupriavidus taiwanensis (strain DSM 17343 / BCRC 17206 / CCUG 44338 / CIP 107171 / LMG 19424 / R1)</name>
    <name type="common">Ralstonia taiwanensis (strain LMG 19424)</name>
    <dbReference type="NCBI Taxonomy" id="977880"/>
    <lineage>
        <taxon>Bacteria</taxon>
        <taxon>Pseudomonadati</taxon>
        <taxon>Pseudomonadota</taxon>
        <taxon>Betaproteobacteria</taxon>
        <taxon>Burkholderiales</taxon>
        <taxon>Burkholderiaceae</taxon>
        <taxon>Cupriavidus</taxon>
    </lineage>
</organism>
<sequence>MTQIHPTALVDPKAELAADVSVGPFSIVGPNVRIGSGTRIGSHTTVEGHTTIGAGNNIGPYASVGGVPQDMKYRNEPTRLEIGDRNTIREFTTIHTGTVQDRGLTSIGNDNWIMAYVHIAHDCMVGNHTVFSSNAQIAGHVEVGDWAILGGMSGVHQFVRIGAHAMLGGASALVQDVPPFVIAASDKSGNKATPHGINVEGLRRRGFDAGQIAALRQAYKLLYKSDLSFDEARTEISALLAQVDAGTAAPLQAFVDFLAATQRGIVR</sequence>
<feature type="chain" id="PRO_1000122697" description="Acyl-[acyl-carrier-protein]--UDP-N-acetylglucosamine O-acyltransferase">
    <location>
        <begin position="1"/>
        <end position="267"/>
    </location>
</feature>
<proteinExistence type="inferred from homology"/>
<accession>B3R2A5</accession>
<keyword id="KW-0012">Acyltransferase</keyword>
<keyword id="KW-0963">Cytoplasm</keyword>
<keyword id="KW-0441">Lipid A biosynthesis</keyword>
<keyword id="KW-0444">Lipid biosynthesis</keyword>
<keyword id="KW-0443">Lipid metabolism</keyword>
<keyword id="KW-0677">Repeat</keyword>
<keyword id="KW-0808">Transferase</keyword>
<name>LPXA_CUPTR</name>
<protein>
    <recommendedName>
        <fullName evidence="1">Acyl-[acyl-carrier-protein]--UDP-N-acetylglucosamine O-acyltransferase</fullName>
        <shortName evidence="1">UDP-N-acetylglucosamine acyltransferase</shortName>
        <ecNumber evidence="1">2.3.1.129</ecNumber>
    </recommendedName>
</protein>
<reference key="1">
    <citation type="journal article" date="2008" name="Genome Res.">
        <title>Genome sequence of the beta-rhizobium Cupriavidus taiwanensis and comparative genomics of rhizobia.</title>
        <authorList>
            <person name="Amadou C."/>
            <person name="Pascal G."/>
            <person name="Mangenot S."/>
            <person name="Glew M."/>
            <person name="Bontemps C."/>
            <person name="Capela D."/>
            <person name="Carrere S."/>
            <person name="Cruveiller S."/>
            <person name="Dossat C."/>
            <person name="Lajus A."/>
            <person name="Marchetti M."/>
            <person name="Poinsot V."/>
            <person name="Rouy Z."/>
            <person name="Servin B."/>
            <person name="Saad M."/>
            <person name="Schenowitz C."/>
            <person name="Barbe V."/>
            <person name="Batut J."/>
            <person name="Medigue C."/>
            <person name="Masson-Boivin C."/>
        </authorList>
    </citation>
    <scope>NUCLEOTIDE SEQUENCE [LARGE SCALE GENOMIC DNA]</scope>
    <source>
        <strain>DSM 17343 / BCRC 17206 / CCUG 44338 / CIP 107171 / LMG 19424 / R1</strain>
    </source>
</reference>